<evidence type="ECO:0000255" key="1">
    <source>
        <dbReference type="HAMAP-Rule" id="MF_00558"/>
    </source>
</evidence>
<reference key="1">
    <citation type="journal article" date="2011" name="J. Bacteriol.">
        <title>Comparative genomics of 28 Salmonella enterica isolates: evidence for CRISPR-mediated adaptive sublineage evolution.</title>
        <authorList>
            <person name="Fricke W.F."/>
            <person name="Mammel M.K."/>
            <person name="McDermott P.F."/>
            <person name="Tartera C."/>
            <person name="White D.G."/>
            <person name="Leclerc J.E."/>
            <person name="Ravel J."/>
            <person name="Cebula T.A."/>
        </authorList>
    </citation>
    <scope>NUCLEOTIDE SEQUENCE [LARGE SCALE GENOMIC DNA]</scope>
    <source>
        <strain>SL483</strain>
    </source>
</reference>
<accession>B5EZG1</accession>
<proteinExistence type="inferred from homology"/>
<organism>
    <name type="scientific">Salmonella agona (strain SL483)</name>
    <dbReference type="NCBI Taxonomy" id="454166"/>
    <lineage>
        <taxon>Bacteria</taxon>
        <taxon>Pseudomonadati</taxon>
        <taxon>Pseudomonadota</taxon>
        <taxon>Gammaproteobacteria</taxon>
        <taxon>Enterobacterales</taxon>
        <taxon>Enterobacteriaceae</taxon>
        <taxon>Salmonella</taxon>
    </lineage>
</organism>
<feature type="chain" id="PRO_1000129220" description="Succinate--CoA ligase [ADP-forming] subunit beta">
    <location>
        <begin position="1"/>
        <end position="388"/>
    </location>
</feature>
<feature type="domain" description="ATP-grasp" evidence="1">
    <location>
        <begin position="9"/>
        <end position="244"/>
    </location>
</feature>
<feature type="binding site" evidence="1">
    <location>
        <position position="46"/>
    </location>
    <ligand>
        <name>ATP</name>
        <dbReference type="ChEBI" id="CHEBI:30616"/>
    </ligand>
</feature>
<feature type="binding site" evidence="1">
    <location>
        <begin position="53"/>
        <end position="55"/>
    </location>
    <ligand>
        <name>ATP</name>
        <dbReference type="ChEBI" id="CHEBI:30616"/>
    </ligand>
</feature>
<feature type="binding site" evidence="1">
    <location>
        <position position="99"/>
    </location>
    <ligand>
        <name>ATP</name>
        <dbReference type="ChEBI" id="CHEBI:30616"/>
    </ligand>
</feature>
<feature type="binding site" evidence="1">
    <location>
        <position position="102"/>
    </location>
    <ligand>
        <name>ATP</name>
        <dbReference type="ChEBI" id="CHEBI:30616"/>
    </ligand>
</feature>
<feature type="binding site" evidence="1">
    <location>
        <position position="107"/>
    </location>
    <ligand>
        <name>ATP</name>
        <dbReference type="ChEBI" id="CHEBI:30616"/>
    </ligand>
</feature>
<feature type="binding site" evidence="1">
    <location>
        <position position="199"/>
    </location>
    <ligand>
        <name>Mg(2+)</name>
        <dbReference type="ChEBI" id="CHEBI:18420"/>
    </ligand>
</feature>
<feature type="binding site" evidence="1">
    <location>
        <position position="213"/>
    </location>
    <ligand>
        <name>Mg(2+)</name>
        <dbReference type="ChEBI" id="CHEBI:18420"/>
    </ligand>
</feature>
<feature type="binding site" evidence="1">
    <location>
        <position position="264"/>
    </location>
    <ligand>
        <name>substrate</name>
        <note>ligand shared with subunit alpha</note>
    </ligand>
</feature>
<feature type="binding site" evidence="1">
    <location>
        <begin position="321"/>
        <end position="323"/>
    </location>
    <ligand>
        <name>substrate</name>
        <note>ligand shared with subunit alpha</note>
    </ligand>
</feature>
<dbReference type="EC" id="6.2.1.5" evidence="1"/>
<dbReference type="EMBL" id="CP001138">
    <property type="protein sequence ID" value="ACH50911.1"/>
    <property type="molecule type" value="Genomic_DNA"/>
</dbReference>
<dbReference type="RefSeq" id="WP_001048590.1">
    <property type="nucleotide sequence ID" value="NC_011149.1"/>
</dbReference>
<dbReference type="SMR" id="B5EZG1"/>
<dbReference type="KEGG" id="sea:SeAg_B0771"/>
<dbReference type="HOGENOM" id="CLU_037430_4_0_6"/>
<dbReference type="UniPathway" id="UPA00223">
    <property type="reaction ID" value="UER00999"/>
</dbReference>
<dbReference type="Proteomes" id="UP000008819">
    <property type="component" value="Chromosome"/>
</dbReference>
<dbReference type="GO" id="GO:0005829">
    <property type="term" value="C:cytosol"/>
    <property type="evidence" value="ECO:0007669"/>
    <property type="project" value="TreeGrafter"/>
</dbReference>
<dbReference type="GO" id="GO:0042709">
    <property type="term" value="C:succinate-CoA ligase complex"/>
    <property type="evidence" value="ECO:0007669"/>
    <property type="project" value="TreeGrafter"/>
</dbReference>
<dbReference type="GO" id="GO:0005524">
    <property type="term" value="F:ATP binding"/>
    <property type="evidence" value="ECO:0007669"/>
    <property type="project" value="UniProtKB-UniRule"/>
</dbReference>
<dbReference type="GO" id="GO:0000287">
    <property type="term" value="F:magnesium ion binding"/>
    <property type="evidence" value="ECO:0007669"/>
    <property type="project" value="UniProtKB-UniRule"/>
</dbReference>
<dbReference type="GO" id="GO:0004775">
    <property type="term" value="F:succinate-CoA ligase (ADP-forming) activity"/>
    <property type="evidence" value="ECO:0007669"/>
    <property type="project" value="UniProtKB-UniRule"/>
</dbReference>
<dbReference type="GO" id="GO:0004776">
    <property type="term" value="F:succinate-CoA ligase (GDP-forming) activity"/>
    <property type="evidence" value="ECO:0007669"/>
    <property type="project" value="RHEA"/>
</dbReference>
<dbReference type="GO" id="GO:0006104">
    <property type="term" value="P:succinyl-CoA metabolic process"/>
    <property type="evidence" value="ECO:0007669"/>
    <property type="project" value="TreeGrafter"/>
</dbReference>
<dbReference type="GO" id="GO:0006099">
    <property type="term" value="P:tricarboxylic acid cycle"/>
    <property type="evidence" value="ECO:0007669"/>
    <property type="project" value="UniProtKB-UniRule"/>
</dbReference>
<dbReference type="FunFam" id="3.30.1490.20:FF:000002">
    <property type="entry name" value="Succinate--CoA ligase [ADP-forming] subunit beta"/>
    <property type="match status" value="1"/>
</dbReference>
<dbReference type="FunFam" id="3.30.470.20:FF:000002">
    <property type="entry name" value="Succinate--CoA ligase [ADP-forming] subunit beta"/>
    <property type="match status" value="1"/>
</dbReference>
<dbReference type="FunFam" id="3.40.50.261:FF:000001">
    <property type="entry name" value="Succinate--CoA ligase [ADP-forming] subunit beta"/>
    <property type="match status" value="1"/>
</dbReference>
<dbReference type="Gene3D" id="3.30.1490.20">
    <property type="entry name" value="ATP-grasp fold, A domain"/>
    <property type="match status" value="1"/>
</dbReference>
<dbReference type="Gene3D" id="3.30.470.20">
    <property type="entry name" value="ATP-grasp fold, B domain"/>
    <property type="match status" value="1"/>
</dbReference>
<dbReference type="Gene3D" id="3.40.50.261">
    <property type="entry name" value="Succinyl-CoA synthetase domains"/>
    <property type="match status" value="1"/>
</dbReference>
<dbReference type="HAMAP" id="MF_00558">
    <property type="entry name" value="Succ_CoA_beta"/>
    <property type="match status" value="1"/>
</dbReference>
<dbReference type="InterPro" id="IPR011761">
    <property type="entry name" value="ATP-grasp"/>
</dbReference>
<dbReference type="InterPro" id="IPR013650">
    <property type="entry name" value="ATP-grasp_succ-CoA_synth-type"/>
</dbReference>
<dbReference type="InterPro" id="IPR013815">
    <property type="entry name" value="ATP_grasp_subdomain_1"/>
</dbReference>
<dbReference type="InterPro" id="IPR017866">
    <property type="entry name" value="Succ-CoA_synthase_bsu_CS"/>
</dbReference>
<dbReference type="InterPro" id="IPR005811">
    <property type="entry name" value="SUCC_ACL_C"/>
</dbReference>
<dbReference type="InterPro" id="IPR005809">
    <property type="entry name" value="Succ_CoA_ligase-like_bsu"/>
</dbReference>
<dbReference type="InterPro" id="IPR016102">
    <property type="entry name" value="Succinyl-CoA_synth-like"/>
</dbReference>
<dbReference type="NCBIfam" id="NF001913">
    <property type="entry name" value="PRK00696.1"/>
    <property type="match status" value="1"/>
</dbReference>
<dbReference type="NCBIfam" id="TIGR01016">
    <property type="entry name" value="sucCoAbeta"/>
    <property type="match status" value="1"/>
</dbReference>
<dbReference type="PANTHER" id="PTHR11815:SF10">
    <property type="entry name" value="SUCCINATE--COA LIGASE [GDP-FORMING] SUBUNIT BETA, MITOCHONDRIAL"/>
    <property type="match status" value="1"/>
</dbReference>
<dbReference type="PANTHER" id="PTHR11815">
    <property type="entry name" value="SUCCINYL-COA SYNTHETASE BETA CHAIN"/>
    <property type="match status" value="1"/>
</dbReference>
<dbReference type="Pfam" id="PF08442">
    <property type="entry name" value="ATP-grasp_2"/>
    <property type="match status" value="1"/>
</dbReference>
<dbReference type="Pfam" id="PF00549">
    <property type="entry name" value="Ligase_CoA"/>
    <property type="match status" value="1"/>
</dbReference>
<dbReference type="PIRSF" id="PIRSF001554">
    <property type="entry name" value="SucCS_beta"/>
    <property type="match status" value="1"/>
</dbReference>
<dbReference type="SUPFAM" id="SSF56059">
    <property type="entry name" value="Glutathione synthetase ATP-binding domain-like"/>
    <property type="match status" value="1"/>
</dbReference>
<dbReference type="SUPFAM" id="SSF52210">
    <property type="entry name" value="Succinyl-CoA synthetase domains"/>
    <property type="match status" value="1"/>
</dbReference>
<dbReference type="PROSITE" id="PS50975">
    <property type="entry name" value="ATP_GRASP"/>
    <property type="match status" value="1"/>
</dbReference>
<dbReference type="PROSITE" id="PS01217">
    <property type="entry name" value="SUCCINYL_COA_LIG_3"/>
    <property type="match status" value="1"/>
</dbReference>
<gene>
    <name evidence="1" type="primary">sucC</name>
    <name type="ordered locus">SeAg_B0771</name>
</gene>
<protein>
    <recommendedName>
        <fullName evidence="1">Succinate--CoA ligase [ADP-forming] subunit beta</fullName>
        <ecNumber evidence="1">6.2.1.5</ecNumber>
    </recommendedName>
    <alternativeName>
        <fullName evidence="1">Succinyl-CoA synthetase subunit beta</fullName>
        <shortName evidence="1">SCS-beta</shortName>
    </alternativeName>
</protein>
<keyword id="KW-0067">ATP-binding</keyword>
<keyword id="KW-0436">Ligase</keyword>
<keyword id="KW-0460">Magnesium</keyword>
<keyword id="KW-0479">Metal-binding</keyword>
<keyword id="KW-0547">Nucleotide-binding</keyword>
<keyword id="KW-0816">Tricarboxylic acid cycle</keyword>
<sequence>MNLHEYQAKQLFARYGLPAPVGYACTTPREAEEAASKIGAGPWVVKCQVHAGGRGKAGGVKVVKSKEEIRAFAENWLGKRLVTYQTDANGQPVNQILVEAATDIGKELYLGAVVDRSSRRVVFMASTEGGVEIEKVAEETPHLIHKVALDPLTGPMPYQGRELAFKLGLEGKLVQQFTKIFMGLATIFLERDLALIEINPLVITKQGDLICLDGKLGADGNALFRQPDLREMRDQSQEDPREAQAAQWELNYVALDGNIGCMVNGAGLAMGTMDIVKLHGGEPANFLDVGGGATKERVTEAFKIILSDDNVKAVLVNIFGGIVRCDLIADGIIGAVEEVGVNVPVVVRLEGNNAELGAKKLADSGLNIIAAKSLTDAAQQVVAAVEGK</sequence>
<comment type="function">
    <text evidence="1">Succinyl-CoA synthetase functions in the citric acid cycle (TCA), coupling the hydrolysis of succinyl-CoA to the synthesis of either ATP or GTP and thus represents the only step of substrate-level phosphorylation in the TCA. The beta subunit provides nucleotide specificity of the enzyme and binds the substrate succinate, while the binding sites for coenzyme A and phosphate are found in the alpha subunit.</text>
</comment>
<comment type="catalytic activity">
    <reaction evidence="1">
        <text>succinate + ATP + CoA = succinyl-CoA + ADP + phosphate</text>
        <dbReference type="Rhea" id="RHEA:17661"/>
        <dbReference type="ChEBI" id="CHEBI:30031"/>
        <dbReference type="ChEBI" id="CHEBI:30616"/>
        <dbReference type="ChEBI" id="CHEBI:43474"/>
        <dbReference type="ChEBI" id="CHEBI:57287"/>
        <dbReference type="ChEBI" id="CHEBI:57292"/>
        <dbReference type="ChEBI" id="CHEBI:456216"/>
        <dbReference type="EC" id="6.2.1.5"/>
    </reaction>
    <physiologicalReaction direction="right-to-left" evidence="1">
        <dbReference type="Rhea" id="RHEA:17663"/>
    </physiologicalReaction>
</comment>
<comment type="catalytic activity">
    <reaction evidence="1">
        <text>GTP + succinate + CoA = succinyl-CoA + GDP + phosphate</text>
        <dbReference type="Rhea" id="RHEA:22120"/>
        <dbReference type="ChEBI" id="CHEBI:30031"/>
        <dbReference type="ChEBI" id="CHEBI:37565"/>
        <dbReference type="ChEBI" id="CHEBI:43474"/>
        <dbReference type="ChEBI" id="CHEBI:57287"/>
        <dbReference type="ChEBI" id="CHEBI:57292"/>
        <dbReference type="ChEBI" id="CHEBI:58189"/>
    </reaction>
    <physiologicalReaction direction="right-to-left" evidence="1">
        <dbReference type="Rhea" id="RHEA:22122"/>
    </physiologicalReaction>
</comment>
<comment type="cofactor">
    <cofactor evidence="1">
        <name>Mg(2+)</name>
        <dbReference type="ChEBI" id="CHEBI:18420"/>
    </cofactor>
    <text evidence="1">Binds 1 Mg(2+) ion per subunit.</text>
</comment>
<comment type="pathway">
    <text evidence="1">Carbohydrate metabolism; tricarboxylic acid cycle; succinate from succinyl-CoA (ligase route): step 1/1.</text>
</comment>
<comment type="subunit">
    <text evidence="1">Heterotetramer of two alpha and two beta subunits.</text>
</comment>
<comment type="similarity">
    <text evidence="1">Belongs to the succinate/malate CoA ligase beta subunit family.</text>
</comment>
<name>SUCC_SALA4</name>